<sequence length="221" mass="24926">MSKLFQARFATTVNDTHCLPATPLREVAFAGRSNAGKSSALNVLCNQKRLAFASKTPGRTQHINYFGIFAKDDLLAYLVDLPGYGYAAVNHETKYHWNALLSDYLQEREQLVGMVLIVDARRGITELDEQMIQWFVPTGKPIHILLSKCDKLNKSECKHALEDVRKQLQQYDPALPDGTGESQQLTAQLFSSTKRIGLEEADNLIIKWLFEAETHEDEITS</sequence>
<gene>
    <name evidence="1" type="primary">engB</name>
    <name type="ordered locus">Pnuc_0084</name>
</gene>
<feature type="chain" id="PRO_1000079177" description="Probable GTP-binding protein EngB">
    <location>
        <begin position="1"/>
        <end position="221"/>
    </location>
</feature>
<feature type="domain" description="EngB-type G" evidence="1">
    <location>
        <begin position="23"/>
        <end position="211"/>
    </location>
</feature>
<feature type="binding site" evidence="1">
    <location>
        <position position="38"/>
    </location>
    <ligand>
        <name>Mg(2+)</name>
        <dbReference type="ChEBI" id="CHEBI:18420"/>
    </ligand>
</feature>
<feature type="binding site" evidence="1">
    <location>
        <position position="60"/>
    </location>
    <ligand>
        <name>Mg(2+)</name>
        <dbReference type="ChEBI" id="CHEBI:18420"/>
    </ligand>
</feature>
<protein>
    <recommendedName>
        <fullName evidence="1">Probable GTP-binding protein EngB</fullName>
    </recommendedName>
</protein>
<comment type="function">
    <text evidence="1">Necessary for normal cell division and for the maintenance of normal septation.</text>
</comment>
<comment type="cofactor">
    <cofactor evidence="1">
        <name>Mg(2+)</name>
        <dbReference type="ChEBI" id="CHEBI:18420"/>
    </cofactor>
</comment>
<comment type="similarity">
    <text evidence="1">Belongs to the TRAFAC class TrmE-Era-EngA-EngB-Septin-like GTPase superfamily. EngB GTPase family.</text>
</comment>
<keyword id="KW-0131">Cell cycle</keyword>
<keyword id="KW-0132">Cell division</keyword>
<keyword id="KW-0342">GTP-binding</keyword>
<keyword id="KW-0460">Magnesium</keyword>
<keyword id="KW-0479">Metal-binding</keyword>
<keyword id="KW-0547">Nucleotide-binding</keyword>
<keyword id="KW-1185">Reference proteome</keyword>
<keyword id="KW-0717">Septation</keyword>
<organism>
    <name type="scientific">Polynucleobacter asymbioticus (strain DSM 18221 / CIP 109841 / QLW-P1DMWA-1)</name>
    <name type="common">Polynucleobacter necessarius subsp. asymbioticus</name>
    <dbReference type="NCBI Taxonomy" id="312153"/>
    <lineage>
        <taxon>Bacteria</taxon>
        <taxon>Pseudomonadati</taxon>
        <taxon>Pseudomonadota</taxon>
        <taxon>Betaproteobacteria</taxon>
        <taxon>Burkholderiales</taxon>
        <taxon>Burkholderiaceae</taxon>
        <taxon>Polynucleobacter</taxon>
    </lineage>
</organism>
<accession>A4SUZ2</accession>
<dbReference type="EMBL" id="CP000655">
    <property type="protein sequence ID" value="ABP33306.1"/>
    <property type="molecule type" value="Genomic_DNA"/>
</dbReference>
<dbReference type="RefSeq" id="WP_011901931.1">
    <property type="nucleotide sequence ID" value="NC_009379.1"/>
</dbReference>
<dbReference type="SMR" id="A4SUZ2"/>
<dbReference type="GeneID" id="31480431"/>
<dbReference type="KEGG" id="pnu:Pnuc_0084"/>
<dbReference type="eggNOG" id="COG0218">
    <property type="taxonomic scope" value="Bacteria"/>
</dbReference>
<dbReference type="HOGENOM" id="CLU_033732_1_1_4"/>
<dbReference type="Proteomes" id="UP000000231">
    <property type="component" value="Chromosome"/>
</dbReference>
<dbReference type="GO" id="GO:0005829">
    <property type="term" value="C:cytosol"/>
    <property type="evidence" value="ECO:0007669"/>
    <property type="project" value="TreeGrafter"/>
</dbReference>
<dbReference type="GO" id="GO:0005525">
    <property type="term" value="F:GTP binding"/>
    <property type="evidence" value="ECO:0007669"/>
    <property type="project" value="UniProtKB-UniRule"/>
</dbReference>
<dbReference type="GO" id="GO:0046872">
    <property type="term" value="F:metal ion binding"/>
    <property type="evidence" value="ECO:0007669"/>
    <property type="project" value="UniProtKB-KW"/>
</dbReference>
<dbReference type="GO" id="GO:0000917">
    <property type="term" value="P:division septum assembly"/>
    <property type="evidence" value="ECO:0007669"/>
    <property type="project" value="UniProtKB-KW"/>
</dbReference>
<dbReference type="CDD" id="cd01876">
    <property type="entry name" value="YihA_EngB"/>
    <property type="match status" value="1"/>
</dbReference>
<dbReference type="FunFam" id="3.40.50.300:FF:000098">
    <property type="entry name" value="Probable GTP-binding protein EngB"/>
    <property type="match status" value="1"/>
</dbReference>
<dbReference type="Gene3D" id="3.40.50.300">
    <property type="entry name" value="P-loop containing nucleotide triphosphate hydrolases"/>
    <property type="match status" value="1"/>
</dbReference>
<dbReference type="HAMAP" id="MF_00321">
    <property type="entry name" value="GTPase_EngB"/>
    <property type="match status" value="1"/>
</dbReference>
<dbReference type="InterPro" id="IPR030393">
    <property type="entry name" value="G_ENGB_dom"/>
</dbReference>
<dbReference type="InterPro" id="IPR006073">
    <property type="entry name" value="GTP-bd"/>
</dbReference>
<dbReference type="InterPro" id="IPR019987">
    <property type="entry name" value="GTP-bd_ribosome_bio_YsxC"/>
</dbReference>
<dbReference type="InterPro" id="IPR027417">
    <property type="entry name" value="P-loop_NTPase"/>
</dbReference>
<dbReference type="NCBIfam" id="TIGR03598">
    <property type="entry name" value="GTPase_YsxC"/>
    <property type="match status" value="1"/>
</dbReference>
<dbReference type="PANTHER" id="PTHR11649:SF13">
    <property type="entry name" value="ENGB-TYPE G DOMAIN-CONTAINING PROTEIN"/>
    <property type="match status" value="1"/>
</dbReference>
<dbReference type="PANTHER" id="PTHR11649">
    <property type="entry name" value="MSS1/TRME-RELATED GTP-BINDING PROTEIN"/>
    <property type="match status" value="1"/>
</dbReference>
<dbReference type="Pfam" id="PF01926">
    <property type="entry name" value="MMR_HSR1"/>
    <property type="match status" value="1"/>
</dbReference>
<dbReference type="SUPFAM" id="SSF52540">
    <property type="entry name" value="P-loop containing nucleoside triphosphate hydrolases"/>
    <property type="match status" value="1"/>
</dbReference>
<dbReference type="PROSITE" id="PS51706">
    <property type="entry name" value="G_ENGB"/>
    <property type="match status" value="1"/>
</dbReference>
<name>ENGB_POLAQ</name>
<reference key="1">
    <citation type="journal article" date="2012" name="Stand. Genomic Sci.">
        <title>Complete genome sequence of Polynucleobacter necessarius subsp. asymbioticus type strain (QLW-P1DMWA-1(T)).</title>
        <authorList>
            <person name="Meincke L."/>
            <person name="Copeland A."/>
            <person name="Lapidus A."/>
            <person name="Lucas S."/>
            <person name="Berry K.W."/>
            <person name="Del Rio T.G."/>
            <person name="Hammon N."/>
            <person name="Dalin E."/>
            <person name="Tice H."/>
            <person name="Pitluck S."/>
            <person name="Richardson P."/>
            <person name="Bruce D."/>
            <person name="Goodwin L."/>
            <person name="Han C."/>
            <person name="Tapia R."/>
            <person name="Detter J.C."/>
            <person name="Schmutz J."/>
            <person name="Brettin T."/>
            <person name="Larimer F."/>
            <person name="Land M."/>
            <person name="Hauser L."/>
            <person name="Kyrpides N.C."/>
            <person name="Ivanova N."/>
            <person name="Goker M."/>
            <person name="Woyke T."/>
            <person name="Wu Q.L."/>
            <person name="Pockl M."/>
            <person name="Hahn M.W."/>
            <person name="Klenk H.P."/>
        </authorList>
    </citation>
    <scope>NUCLEOTIDE SEQUENCE [LARGE SCALE GENOMIC DNA]</scope>
    <source>
        <strain>DSM 18221 / CIP 109841 / QLW-P1DMWA-1</strain>
    </source>
</reference>
<evidence type="ECO:0000255" key="1">
    <source>
        <dbReference type="HAMAP-Rule" id="MF_00321"/>
    </source>
</evidence>
<proteinExistence type="inferred from homology"/>